<accession>Q8EDW4</accession>
<comment type="function">
    <text evidence="1">Involved in the modulation of the specificity of the ClpAP-mediated ATP-dependent protein degradation.</text>
</comment>
<comment type="subunit">
    <text evidence="1">Binds to the N-terminal domain of the chaperone ClpA.</text>
</comment>
<comment type="similarity">
    <text evidence="1">Belongs to the ClpS family.</text>
</comment>
<organism>
    <name type="scientific">Shewanella oneidensis (strain ATCC 700550 / JCM 31522 / CIP 106686 / LMG 19005 / NCIMB 14063 / MR-1)</name>
    <dbReference type="NCBI Taxonomy" id="211586"/>
    <lineage>
        <taxon>Bacteria</taxon>
        <taxon>Pseudomonadati</taxon>
        <taxon>Pseudomonadota</taxon>
        <taxon>Gammaproteobacteria</taxon>
        <taxon>Alteromonadales</taxon>
        <taxon>Shewanellaceae</taxon>
        <taxon>Shewanella</taxon>
    </lineage>
</organism>
<reference key="1">
    <citation type="journal article" date="2002" name="Nat. Biotechnol.">
        <title>Genome sequence of the dissimilatory metal ion-reducing bacterium Shewanella oneidensis.</title>
        <authorList>
            <person name="Heidelberg J.F."/>
            <person name="Paulsen I.T."/>
            <person name="Nelson K.E."/>
            <person name="Gaidos E.J."/>
            <person name="Nelson W.C."/>
            <person name="Read T.D."/>
            <person name="Eisen J.A."/>
            <person name="Seshadri R."/>
            <person name="Ward N.L."/>
            <person name="Methe B.A."/>
            <person name="Clayton R.A."/>
            <person name="Meyer T."/>
            <person name="Tsapin A."/>
            <person name="Scott J."/>
            <person name="Beanan M.J."/>
            <person name="Brinkac L.M."/>
            <person name="Daugherty S.C."/>
            <person name="DeBoy R.T."/>
            <person name="Dodson R.J."/>
            <person name="Durkin A.S."/>
            <person name="Haft D.H."/>
            <person name="Kolonay J.F."/>
            <person name="Madupu R."/>
            <person name="Peterson J.D."/>
            <person name="Umayam L.A."/>
            <person name="White O."/>
            <person name="Wolf A.M."/>
            <person name="Vamathevan J.J."/>
            <person name="Weidman J.F."/>
            <person name="Impraim M."/>
            <person name="Lee K."/>
            <person name="Berry K.J."/>
            <person name="Lee C."/>
            <person name="Mueller J."/>
            <person name="Khouri H.M."/>
            <person name="Gill J."/>
            <person name="Utterback T.R."/>
            <person name="McDonald L.A."/>
            <person name="Feldblyum T.V."/>
            <person name="Smith H.O."/>
            <person name="Venter J.C."/>
            <person name="Nealson K.H."/>
            <person name="Fraser C.M."/>
        </authorList>
    </citation>
    <scope>NUCLEOTIDE SEQUENCE [LARGE SCALE GENOMIC DNA]</scope>
    <source>
        <strain>ATCC 700550 / JCM 31522 / CIP 106686 / LMG 19005 / NCIMB 14063 / MR-1</strain>
    </source>
</reference>
<protein>
    <recommendedName>
        <fullName evidence="1">ATP-dependent Clp protease adapter protein ClpS</fullName>
    </recommendedName>
</protein>
<gene>
    <name evidence="1" type="primary">clpS</name>
    <name type="ordered locus">SO_2627</name>
</gene>
<keyword id="KW-1185">Reference proteome</keyword>
<proteinExistence type="inferred from homology"/>
<name>CLPS_SHEON</name>
<dbReference type="EMBL" id="AE014299">
    <property type="protein sequence ID" value="AAN55656.1"/>
    <property type="molecule type" value="Genomic_DNA"/>
</dbReference>
<dbReference type="RefSeq" id="NP_718212.1">
    <property type="nucleotide sequence ID" value="NC_004347.2"/>
</dbReference>
<dbReference type="RefSeq" id="WP_011072575.1">
    <property type="nucleotide sequence ID" value="NZ_CP053946.1"/>
</dbReference>
<dbReference type="SMR" id="Q8EDW4"/>
<dbReference type="STRING" id="211586.SO_2627"/>
<dbReference type="PaxDb" id="211586-SO_2627"/>
<dbReference type="KEGG" id="son:SO_2627"/>
<dbReference type="PATRIC" id="fig|211586.12.peg.2530"/>
<dbReference type="eggNOG" id="COG2127">
    <property type="taxonomic scope" value="Bacteria"/>
</dbReference>
<dbReference type="HOGENOM" id="CLU_134358_2_1_6"/>
<dbReference type="OrthoDB" id="9796121at2"/>
<dbReference type="PhylomeDB" id="Q8EDW4"/>
<dbReference type="BioCyc" id="SONE211586:G1GMP-2413-MONOMER"/>
<dbReference type="Proteomes" id="UP000008186">
    <property type="component" value="Chromosome"/>
</dbReference>
<dbReference type="GO" id="GO:0030163">
    <property type="term" value="P:protein catabolic process"/>
    <property type="evidence" value="ECO:0007669"/>
    <property type="project" value="InterPro"/>
</dbReference>
<dbReference type="GO" id="GO:0006508">
    <property type="term" value="P:proteolysis"/>
    <property type="evidence" value="ECO:0007669"/>
    <property type="project" value="UniProtKB-UniRule"/>
</dbReference>
<dbReference type="FunFam" id="3.30.1390.10:FF:000002">
    <property type="entry name" value="ATP-dependent Clp protease adapter protein ClpS"/>
    <property type="match status" value="1"/>
</dbReference>
<dbReference type="Gene3D" id="3.30.1390.10">
    <property type="match status" value="1"/>
</dbReference>
<dbReference type="HAMAP" id="MF_00302">
    <property type="entry name" value="ClpS"/>
    <property type="match status" value="1"/>
</dbReference>
<dbReference type="InterPro" id="IPR022935">
    <property type="entry name" value="ClpS"/>
</dbReference>
<dbReference type="InterPro" id="IPR003769">
    <property type="entry name" value="ClpS_core"/>
</dbReference>
<dbReference type="InterPro" id="IPR014719">
    <property type="entry name" value="Ribosomal_bL12_C/ClpS-like"/>
</dbReference>
<dbReference type="NCBIfam" id="NF000670">
    <property type="entry name" value="PRK00033.1-3"/>
    <property type="match status" value="1"/>
</dbReference>
<dbReference type="NCBIfam" id="NF000672">
    <property type="entry name" value="PRK00033.1-5"/>
    <property type="match status" value="1"/>
</dbReference>
<dbReference type="PANTHER" id="PTHR33473:SF19">
    <property type="entry name" value="ATP-DEPENDENT CLP PROTEASE ADAPTER PROTEIN CLPS"/>
    <property type="match status" value="1"/>
</dbReference>
<dbReference type="PANTHER" id="PTHR33473">
    <property type="entry name" value="ATP-DEPENDENT CLP PROTEASE ADAPTER PROTEIN CLPS1, CHLOROPLASTIC"/>
    <property type="match status" value="1"/>
</dbReference>
<dbReference type="Pfam" id="PF02617">
    <property type="entry name" value="ClpS"/>
    <property type="match status" value="1"/>
</dbReference>
<dbReference type="SUPFAM" id="SSF54736">
    <property type="entry name" value="ClpS-like"/>
    <property type="match status" value="1"/>
</dbReference>
<feature type="chain" id="PRO_0000215748" description="ATP-dependent Clp protease adapter protein ClpS">
    <location>
        <begin position="1"/>
        <end position="102"/>
    </location>
</feature>
<evidence type="ECO:0000255" key="1">
    <source>
        <dbReference type="HAMAP-Rule" id="MF_00302"/>
    </source>
</evidence>
<sequence length="102" mass="11705">MGKTGNIEHVEERVESELMPPSMYKVILNNDDYTPMDFVIEVLQIFFRKNEQEATDIMLTIHHQGKGICGIFPFGIAETKVIQVNQFARQNQHPLLCSLEKA</sequence>